<name>NRDR_STRP3</name>
<gene>
    <name evidence="1" type="primary">nrdR</name>
    <name type="ordered locus">SpyM3_0246</name>
</gene>
<reference key="1">
    <citation type="journal article" date="2002" name="Proc. Natl. Acad. Sci. U.S.A.">
        <title>Genome sequence of a serotype M3 strain of group A Streptococcus: phage-encoded toxins, the high-virulence phenotype, and clone emergence.</title>
        <authorList>
            <person name="Beres S.B."/>
            <person name="Sylva G.L."/>
            <person name="Barbian K.D."/>
            <person name="Lei B."/>
            <person name="Hoff J.S."/>
            <person name="Mammarella N.D."/>
            <person name="Liu M.-Y."/>
            <person name="Smoot J.C."/>
            <person name="Porcella S.F."/>
            <person name="Parkins L.D."/>
            <person name="Campbell D.S."/>
            <person name="Smith T.M."/>
            <person name="McCormick J.K."/>
            <person name="Leung D.Y.M."/>
            <person name="Schlievert P.M."/>
            <person name="Musser J.M."/>
        </authorList>
    </citation>
    <scope>NUCLEOTIDE SEQUENCE [LARGE SCALE GENOMIC DNA]</scope>
    <source>
        <strain>ATCC BAA-595 / MGAS315</strain>
    </source>
</reference>
<organism>
    <name type="scientific">Streptococcus pyogenes serotype M3 (strain ATCC BAA-595 / MGAS315)</name>
    <dbReference type="NCBI Taxonomy" id="198466"/>
    <lineage>
        <taxon>Bacteria</taxon>
        <taxon>Bacillati</taxon>
        <taxon>Bacillota</taxon>
        <taxon>Bacilli</taxon>
        <taxon>Lactobacillales</taxon>
        <taxon>Streptococcaceae</taxon>
        <taxon>Streptococcus</taxon>
    </lineage>
</organism>
<keyword id="KW-0067">ATP-binding</keyword>
<keyword id="KW-0238">DNA-binding</keyword>
<keyword id="KW-0479">Metal-binding</keyword>
<keyword id="KW-0547">Nucleotide-binding</keyword>
<keyword id="KW-0678">Repressor</keyword>
<keyword id="KW-0804">Transcription</keyword>
<keyword id="KW-0805">Transcription regulation</keyword>
<keyword id="KW-0862">Zinc</keyword>
<keyword id="KW-0863">Zinc-finger</keyword>
<accession>P0DC74</accession>
<accession>P67321</accession>
<accession>Q9A1D3</accession>
<dbReference type="EMBL" id="AE014074">
    <property type="protein sequence ID" value="AAM78853.1"/>
    <property type="molecule type" value="Genomic_DNA"/>
</dbReference>
<dbReference type="RefSeq" id="WP_002985941.1">
    <property type="nucleotide sequence ID" value="NC_004070.1"/>
</dbReference>
<dbReference type="SMR" id="P0DC74"/>
<dbReference type="GeneID" id="69901381"/>
<dbReference type="KEGG" id="spg:SpyM3_0246"/>
<dbReference type="HOGENOM" id="CLU_108412_0_0_9"/>
<dbReference type="Proteomes" id="UP000000564">
    <property type="component" value="Chromosome"/>
</dbReference>
<dbReference type="GO" id="GO:0005524">
    <property type="term" value="F:ATP binding"/>
    <property type="evidence" value="ECO:0007669"/>
    <property type="project" value="UniProtKB-KW"/>
</dbReference>
<dbReference type="GO" id="GO:0003677">
    <property type="term" value="F:DNA binding"/>
    <property type="evidence" value="ECO:0007669"/>
    <property type="project" value="UniProtKB-KW"/>
</dbReference>
<dbReference type="GO" id="GO:0008270">
    <property type="term" value="F:zinc ion binding"/>
    <property type="evidence" value="ECO:0007669"/>
    <property type="project" value="UniProtKB-UniRule"/>
</dbReference>
<dbReference type="GO" id="GO:0045892">
    <property type="term" value="P:negative regulation of DNA-templated transcription"/>
    <property type="evidence" value="ECO:0007669"/>
    <property type="project" value="UniProtKB-UniRule"/>
</dbReference>
<dbReference type="HAMAP" id="MF_00440">
    <property type="entry name" value="NrdR"/>
    <property type="match status" value="1"/>
</dbReference>
<dbReference type="InterPro" id="IPR005144">
    <property type="entry name" value="ATP-cone_dom"/>
</dbReference>
<dbReference type="InterPro" id="IPR055173">
    <property type="entry name" value="NrdR-like_N"/>
</dbReference>
<dbReference type="InterPro" id="IPR003796">
    <property type="entry name" value="RNR_NrdR-like"/>
</dbReference>
<dbReference type="NCBIfam" id="TIGR00244">
    <property type="entry name" value="transcriptional regulator NrdR"/>
    <property type="match status" value="1"/>
</dbReference>
<dbReference type="PANTHER" id="PTHR30455">
    <property type="entry name" value="TRANSCRIPTIONAL REPRESSOR NRDR"/>
    <property type="match status" value="1"/>
</dbReference>
<dbReference type="PANTHER" id="PTHR30455:SF2">
    <property type="entry name" value="TRANSCRIPTIONAL REPRESSOR NRDR"/>
    <property type="match status" value="1"/>
</dbReference>
<dbReference type="Pfam" id="PF03477">
    <property type="entry name" value="ATP-cone"/>
    <property type="match status" value="1"/>
</dbReference>
<dbReference type="Pfam" id="PF22811">
    <property type="entry name" value="Zn_ribbon_NrdR"/>
    <property type="match status" value="1"/>
</dbReference>
<dbReference type="PROSITE" id="PS51161">
    <property type="entry name" value="ATP_CONE"/>
    <property type="match status" value="1"/>
</dbReference>
<protein>
    <recommendedName>
        <fullName evidence="1">Transcriptional repressor NrdR</fullName>
    </recommendedName>
</protein>
<proteinExistence type="inferred from homology"/>
<evidence type="ECO:0000255" key="1">
    <source>
        <dbReference type="HAMAP-Rule" id="MF_00440"/>
    </source>
</evidence>
<feature type="chain" id="PRO_0000182361" description="Transcriptional repressor NrdR">
    <location>
        <begin position="1"/>
        <end position="164"/>
    </location>
</feature>
<feature type="domain" description="ATP-cone" evidence="1">
    <location>
        <begin position="49"/>
        <end position="139"/>
    </location>
</feature>
<feature type="zinc finger region" evidence="1">
    <location>
        <begin position="3"/>
        <end position="34"/>
    </location>
</feature>
<sequence length="164" mass="19131">MRCPKCNYHKSSVVDSRQAEDGNTIRRRRECEQCHTRFTTFERVEELPLLVIKKDGTREQFSRDKILNGVVQSAQKRPVSSTDIENVISRIEQEVRTTYENEVSSTAIGNLVMDELAELDEITYVRFASVYKSFKDVDEIEELLQQITNRVRGKKKRLNNDETN</sequence>
<comment type="function">
    <text evidence="1">Negatively regulates transcription of bacterial ribonucleotide reductase nrd genes and operons by binding to NrdR-boxes.</text>
</comment>
<comment type="cofactor">
    <cofactor evidence="1">
        <name>Zn(2+)</name>
        <dbReference type="ChEBI" id="CHEBI:29105"/>
    </cofactor>
    <text evidence="1">Binds 1 zinc ion.</text>
</comment>
<comment type="similarity">
    <text evidence="1">Belongs to the NrdR family.</text>
</comment>